<name>CAIT_ECODH</name>
<organism>
    <name type="scientific">Escherichia coli (strain K12 / DH10B)</name>
    <dbReference type="NCBI Taxonomy" id="316385"/>
    <lineage>
        <taxon>Bacteria</taxon>
        <taxon>Pseudomonadati</taxon>
        <taxon>Pseudomonadota</taxon>
        <taxon>Gammaproteobacteria</taxon>
        <taxon>Enterobacterales</taxon>
        <taxon>Enterobacteriaceae</taxon>
        <taxon>Escherichia</taxon>
    </lineage>
</organism>
<keyword id="KW-0050">Antiport</keyword>
<keyword id="KW-0997">Cell inner membrane</keyword>
<keyword id="KW-1003">Cell membrane</keyword>
<keyword id="KW-0472">Membrane</keyword>
<keyword id="KW-0812">Transmembrane</keyword>
<keyword id="KW-1133">Transmembrane helix</keyword>
<keyword id="KW-0813">Transport</keyword>
<sequence length="504" mass="56587">MKNEKRKTGIEPKVFFPPLIIVGILCWLTVRDLDAANVVINAVFSYVTNVWGWAFEWYMVVMLFGWFWLVFGPYAKKRLGNEPPEFSTASWIFMMFASCTSAAVLFWGSIEIYYYISTPPFGLEPNSTGAKELGLAYSLFHWGPLPWATYSFLSVAFAYFFFVRKMEVIRPSSTLVPLVGEKHAKGLFGTIVDNFYLVALIFAMGTSLGLATPLVTECMQWLFGIPHTLQLDAIIITCWIILNAICVACGLQKGVRIASDVRSYLSFLMLGWVFIVSGASFIMNYFTDSVGMLLMYLPRMLFYTDPIAKGGFPQGWTVFYWAWWVIYAIQMSIFLARISRGRTVRELCFGMVLGLTASTWILWTVLGSNTLLLIDKNIINIPNLIEQYGVARAIIETWAALPLSTATMWGFFILCFIATVTLVNACSYTLAMSTCREVRDGEEPPLLVRIGWSILVGIIGIVLLALGGLKPIQTAIIAGGCPLFFVNIMVTLSFIKDAKQNWKD</sequence>
<evidence type="ECO:0000255" key="1">
    <source>
        <dbReference type="HAMAP-Rule" id="MF_01049"/>
    </source>
</evidence>
<comment type="function">
    <text evidence="1">Catalyzes the exchange of L-carnitine for gamma-butyrobetaine.</text>
</comment>
<comment type="catalytic activity">
    <reaction evidence="1">
        <text>4-(trimethylamino)butanoate(in) + (R)-carnitine(out) = 4-(trimethylamino)butanoate(out) + (R)-carnitine(in)</text>
        <dbReference type="Rhea" id="RHEA:29427"/>
        <dbReference type="ChEBI" id="CHEBI:16244"/>
        <dbReference type="ChEBI" id="CHEBI:16347"/>
    </reaction>
</comment>
<comment type="pathway">
    <text evidence="1">Amine and polyamine metabolism; carnitine metabolism.</text>
</comment>
<comment type="subunit">
    <text evidence="1">Homotrimer.</text>
</comment>
<comment type="subcellular location">
    <subcellularLocation>
        <location evidence="1">Cell inner membrane</location>
        <topology evidence="1">Multi-pass membrane protein</topology>
    </subcellularLocation>
</comment>
<comment type="similarity">
    <text evidence="1">Belongs to the BCCT transporter (TC 2.A.15) family. CaiT subfamily.</text>
</comment>
<reference key="1">
    <citation type="journal article" date="2008" name="J. Bacteriol.">
        <title>The complete genome sequence of Escherichia coli DH10B: insights into the biology of a laboratory workhorse.</title>
        <authorList>
            <person name="Durfee T."/>
            <person name="Nelson R."/>
            <person name="Baldwin S."/>
            <person name="Plunkett G. III"/>
            <person name="Burland V."/>
            <person name="Mau B."/>
            <person name="Petrosino J.F."/>
            <person name="Qin X."/>
            <person name="Muzny D.M."/>
            <person name="Ayele M."/>
            <person name="Gibbs R.A."/>
            <person name="Csorgo B."/>
            <person name="Posfai G."/>
            <person name="Weinstock G.M."/>
            <person name="Blattner F.R."/>
        </authorList>
    </citation>
    <scope>NUCLEOTIDE SEQUENCE [LARGE SCALE GENOMIC DNA]</scope>
    <source>
        <strain>K12 / DH10B</strain>
    </source>
</reference>
<gene>
    <name evidence="1" type="primary">caiT</name>
    <name type="ordered locus">ECDH10B_0041</name>
</gene>
<proteinExistence type="inferred from homology"/>
<protein>
    <recommendedName>
        <fullName evidence="1">L-carnitine/gamma-butyrobetaine antiporter</fullName>
    </recommendedName>
</protein>
<feature type="chain" id="PRO_1000136232" description="L-carnitine/gamma-butyrobetaine antiporter">
    <location>
        <begin position="1"/>
        <end position="504"/>
    </location>
</feature>
<feature type="transmembrane region" description="Helical" evidence="1">
    <location>
        <begin position="10"/>
        <end position="30"/>
    </location>
</feature>
<feature type="transmembrane region" description="Helical" evidence="1">
    <location>
        <begin position="51"/>
        <end position="71"/>
    </location>
</feature>
<feature type="transmembrane region" description="Helical" evidence="1">
    <location>
        <begin position="92"/>
        <end position="112"/>
    </location>
</feature>
<feature type="transmembrane region" description="Helical" evidence="1">
    <location>
        <begin position="143"/>
        <end position="163"/>
    </location>
</feature>
<feature type="transmembrane region" description="Helical" evidence="1">
    <location>
        <begin position="195"/>
        <end position="215"/>
    </location>
</feature>
<feature type="transmembrane region" description="Helical" evidence="1">
    <location>
        <begin position="231"/>
        <end position="251"/>
    </location>
</feature>
<feature type="transmembrane region" description="Helical" evidence="1">
    <location>
        <begin position="263"/>
        <end position="283"/>
    </location>
</feature>
<feature type="transmembrane region" description="Helical" evidence="1">
    <location>
        <begin position="316"/>
        <end position="336"/>
    </location>
</feature>
<feature type="transmembrane region" description="Helical" evidence="1">
    <location>
        <begin position="347"/>
        <end position="367"/>
    </location>
</feature>
<feature type="transmembrane region" description="Helical" evidence="1">
    <location>
        <begin position="398"/>
        <end position="418"/>
    </location>
</feature>
<feature type="transmembrane region" description="Helical" evidence="1">
    <location>
        <begin position="446"/>
        <end position="466"/>
    </location>
</feature>
<feature type="transmembrane region" description="Helical" evidence="1">
    <location>
        <begin position="475"/>
        <end position="495"/>
    </location>
</feature>
<accession>B1XBG5</accession>
<dbReference type="EMBL" id="CP000948">
    <property type="protein sequence ID" value="ACB01245.1"/>
    <property type="molecule type" value="Genomic_DNA"/>
</dbReference>
<dbReference type="RefSeq" id="WP_000787103.1">
    <property type="nucleotide sequence ID" value="NC_010473.1"/>
</dbReference>
<dbReference type="SMR" id="B1XBG5"/>
<dbReference type="GeneID" id="93777395"/>
<dbReference type="KEGG" id="ecd:ECDH10B_0041"/>
<dbReference type="HOGENOM" id="CLU_010118_6_0_6"/>
<dbReference type="UniPathway" id="UPA00117"/>
<dbReference type="GO" id="GO:0005886">
    <property type="term" value="C:plasma membrane"/>
    <property type="evidence" value="ECO:0007669"/>
    <property type="project" value="UniProtKB-SubCell"/>
</dbReference>
<dbReference type="GO" id="GO:0044667">
    <property type="term" value="F:(R)-carnitine:4-(trimethylammonio)butanoate antiporter activity"/>
    <property type="evidence" value="ECO:0007669"/>
    <property type="project" value="UniProtKB-UniRule"/>
</dbReference>
<dbReference type="GO" id="GO:1900751">
    <property type="term" value="P:4-(trimethylammonio)butanoate transport"/>
    <property type="evidence" value="ECO:0007669"/>
    <property type="project" value="InterPro"/>
</dbReference>
<dbReference type="GO" id="GO:0009437">
    <property type="term" value="P:carnitine metabolic process"/>
    <property type="evidence" value="ECO:0007669"/>
    <property type="project" value="UniProtKB-UniRule"/>
</dbReference>
<dbReference type="HAMAP" id="MF_01049">
    <property type="entry name" value="CaiT"/>
    <property type="match status" value="1"/>
</dbReference>
<dbReference type="InterPro" id="IPR018093">
    <property type="entry name" value="BCCT_CS"/>
</dbReference>
<dbReference type="InterPro" id="IPR000060">
    <property type="entry name" value="BCCT_transptr"/>
</dbReference>
<dbReference type="InterPro" id="IPR023449">
    <property type="entry name" value="BCCT_transptr_CaiT"/>
</dbReference>
<dbReference type="NCBIfam" id="TIGR00842">
    <property type="entry name" value="bcct"/>
    <property type="match status" value="1"/>
</dbReference>
<dbReference type="NCBIfam" id="NF002887">
    <property type="entry name" value="PRK03356.1"/>
    <property type="match status" value="1"/>
</dbReference>
<dbReference type="PANTHER" id="PTHR30047">
    <property type="entry name" value="HIGH-AFFINITY CHOLINE TRANSPORT PROTEIN-RELATED"/>
    <property type="match status" value="1"/>
</dbReference>
<dbReference type="PANTHER" id="PTHR30047:SF11">
    <property type="entry name" value="L-CARNITINE_GAMMA-BUTYROBETAINE ANTIPORTER"/>
    <property type="match status" value="1"/>
</dbReference>
<dbReference type="Pfam" id="PF02028">
    <property type="entry name" value="BCCT"/>
    <property type="match status" value="1"/>
</dbReference>
<dbReference type="PROSITE" id="PS01303">
    <property type="entry name" value="BCCT"/>
    <property type="match status" value="1"/>
</dbReference>